<comment type="function">
    <text evidence="4 5 6 7 8 10 12 13 14 15">Functions as a component of the nuclear pore complex (NPC). NPC components, collectively referred to as nucleoporins (NUPs), can play the role of both NPC structural components and of docking or interaction partners for transiently associated nuclear transport factors. Active directional transport is assured by both, a Phe-Gly (FG) repeat affinity gradient for these transport factors across the NPC and a transport cofactor concentration gradient across the nuclear envelope (GSP1 and GSP2 GTPases associated predominantly with GTP in the nucleus, with GDP in the cytoplasm). NUP145 is autocatalytically cleaved in vivo in 2 polypeptides which assume different functions in the NPC. NUP145N as one of the FG repeat nucleoporins participates in karyopherin interactions and contains part of the autocatalytic cleavage activity. NUP145C as part of the NUP84 complex is involved in nuclear poly(A)+ RNA and tRNA export. It is also required for normal NPC distribution (probably through interactions with MLP1 and MLP2) and NPC assembly, as well as for normal nuclear envelope organization.</text>
</comment>
<comment type="subunit">
    <text evidence="5 6 11">Component of the nuclear pore complex (NPC). NPC constitutes the exclusive means of nucleocytoplasmic transport. NPCs allow the passive diffusion of ions and small molecules and the active, nuclear transport receptor-mediated bidirectional transport of macromolecules such as proteins, RNAs, ribonucleoparticles (RNPs), and ribosomal subunits across the nuclear envelope. Due to its 8-fold rotational symmetry, all subunits are present with 8 copies or multiples thereof. NUP145C is part of the heptameric 0.5 MDa autoassembling NUP84 NPC subcomplex (NUP84, NUP85, NUP120, NUP133, NUP145C, SEC13 and SEH1). NUP145N may bind homomeric RNA and interacts through its FG repeats with karyopherins. Interacts with MLP1 and MLP2.</text>
</comment>
<comment type="interaction">
    <interactant intactId="EBI-11730">
        <id>P49687</id>
    </interactant>
    <interactant intactId="EBI-11950">
        <id>P32500</id>
        <label>NDC1</label>
    </interactant>
    <organismsDiffer>false</organismsDiffer>
    <experiments>3</experiments>
</comment>
<comment type="interaction">
    <interactant intactId="EBI-11730">
        <id>P49687</id>
    </interactant>
    <interactant intactId="EBI-11713">
        <id>P35729</id>
        <label>NUP120</label>
    </interactant>
    <organismsDiffer>false</organismsDiffer>
    <experiments>24</experiments>
</comment>
<comment type="interaction">
    <interactant intactId="EBI-11730">
        <id>P49687</id>
    </interactant>
    <interactant intactId="EBI-11756">
        <id>P38181</id>
        <label>NUP170</label>
    </interactant>
    <organismsDiffer>false</organismsDiffer>
    <experiments>4</experiments>
</comment>
<comment type="interaction">
    <interactant intactId="EBI-11730">
        <id>P49687</id>
    </interactant>
    <interactant intactId="EBI-25846">
        <id>P47054</id>
        <label>NUP192</label>
    </interactant>
    <organismsDiffer>false</organismsDiffer>
    <experiments>2</experiments>
</comment>
<comment type="interaction">
    <interactant intactId="EBI-11730">
        <id>P49687</id>
    </interactant>
    <interactant intactId="EBI-12324">
        <id>P48837</id>
        <label>NUP57</label>
    </interactant>
    <organismsDiffer>false</organismsDiffer>
    <experiments>2</experiments>
</comment>
<comment type="interaction">
    <interactant intactId="EBI-11730">
        <id>P49687</id>
    </interactant>
    <interactant intactId="EBI-12337">
        <id>P52891</id>
        <label>NUP84</label>
    </interactant>
    <organismsDiffer>false</organismsDiffer>
    <experiments>18</experiments>
</comment>
<comment type="interaction">
    <interactant intactId="EBI-11730">
        <id>P49687</id>
    </interactant>
    <interactant intactId="EBI-12345">
        <id>P46673</id>
        <label>NUP85</label>
    </interactant>
    <organismsDiffer>false</organismsDiffer>
    <experiments>13</experiments>
</comment>
<comment type="interaction">
    <interactant intactId="EBI-11730">
        <id>P49687</id>
    </interactant>
    <interactant intactId="EBI-16529">
        <id>Q04491</id>
        <label>SEC13</label>
    </interactant>
    <organismsDiffer>false</organismsDiffer>
    <experiments>25</experiments>
</comment>
<comment type="interaction">
    <interactant intactId="EBI-11730">
        <id>P49687</id>
    </interactant>
    <interactant intactId="EBI-1046596">
        <id>P55735</id>
        <label>SEC13</label>
    </interactant>
    <organismsDiffer>true</organismsDiffer>
    <experiments>15</experiments>
</comment>
<comment type="subcellular location">
    <molecule>Nucleoporin NUP145C</molecule>
    <subcellularLocation>
        <location evidence="6">Nucleus</location>
        <location evidence="6">Nuclear pore complex</location>
    </subcellularLocation>
    <subcellularLocation>
        <location>Nucleus membrane</location>
        <topology>Peripheral membrane protein</topology>
        <orientation>Cytoplasmic side</orientation>
    </subcellularLocation>
    <subcellularLocation>
        <location>Nucleus membrane</location>
        <topology>Peripheral membrane protein</topology>
        <orientation>Nucleoplasmic side</orientation>
    </subcellularLocation>
    <text>Symmetrically distributed on the cytoplasmic and nucleoplasmic side of nuclear envelope.</text>
</comment>
<comment type="subcellular location">
    <molecule>Nucleoporin NUP145N</molecule>
    <subcellularLocation>
        <location evidence="6">Nucleus</location>
        <location evidence="6">Nuclear pore complex</location>
    </subcellularLocation>
    <subcellularLocation>
        <location>Nucleus membrane</location>
        <topology>Peripheral membrane protein</topology>
        <orientation>Nucleoplasmic side</orientation>
    </subcellularLocation>
    <text>Biased towards the nucleoplasmic side, nuclear pore complex.</text>
</comment>
<comment type="domain">
    <text>Contains FG repeats. FG repeats are interaction sites for karyopherins (importins, exportins) and form probably an affinity gradient, guiding the transport proteins unidirectionally with their cargo through the NPC. FG repeat regions are highly flexible and lack ordered secondary structure. The overall conservation of FG repeats regarding exact sequence, spacing, and repeat unit length is limited. FG repeat types and their physico-chemical environment change across the NPC from the nucleoplasmic to the cytoplasmic side: GLFG repeats are especially abundant in NUPs in the central region (lacking a charged environment but are enriched in Ser, Thr, Gln, and Asn).</text>
</comment>
<comment type="PTM">
    <text evidence="15">NUP145 is autocatalytically cleaved in NUP145N and NUP145C.</text>
</comment>
<comment type="miscellaneous">
    <text evidence="9">Present with 4630 molecules/cell in log phase SD medium.</text>
</comment>
<comment type="similarity">
    <text evidence="16">Belongs to the nucleoporin GLFG family.</text>
</comment>
<keyword id="KW-0002">3D-structure</keyword>
<keyword id="KW-0068">Autocatalytic cleavage</keyword>
<keyword id="KW-0378">Hydrolase</keyword>
<keyword id="KW-0472">Membrane</keyword>
<keyword id="KW-0509">mRNA transport</keyword>
<keyword id="KW-0906">Nuclear pore complex</keyword>
<keyword id="KW-0539">Nucleus</keyword>
<keyword id="KW-0597">Phosphoprotein</keyword>
<keyword id="KW-0653">Protein transport</keyword>
<keyword id="KW-1185">Reference proteome</keyword>
<keyword id="KW-0677">Repeat</keyword>
<keyword id="KW-0694">RNA-binding</keyword>
<keyword id="KW-0811">Translocation</keyword>
<keyword id="KW-0813">Transport</keyword>
<reference key="1">
    <citation type="journal article" date="1994" name="Cell">
        <title>Nup145p is required for nuclear export of mRNA and binds homopolymeric RNA in vitro via a novel conserved motif.</title>
        <authorList>
            <person name="Fabre E."/>
            <person name="Boelens W.C."/>
            <person name="Wimmer C."/>
            <person name="Mattaj I.W."/>
            <person name="Hurt E.C."/>
        </authorList>
    </citation>
    <scope>NUCLEOTIDE SEQUENCE [GENOMIC DNA]</scope>
    <scope>FUNCTION IN NUCLEAR MRNA EXPORT</scope>
</reference>
<reference key="2">
    <citation type="journal article" date="1994" name="J. Cell Biol.">
        <title>NUP145 encodes a novel yeast glycine-leucine-phenylalanine-glycine (GLFG) nucleoporin required for nuclear envelope structure.</title>
        <authorList>
            <person name="Wente S.R."/>
            <person name="Blobel G."/>
        </authorList>
    </citation>
    <scope>NUCLEOTIDE SEQUENCE [GENOMIC DNA]</scope>
    <scope>FUNCTION IN NPC ASSEMBLY AND DISTRIBUTION</scope>
    <source>
        <strain>ATCC 26109 / X2180</strain>
    </source>
</reference>
<reference key="3">
    <citation type="journal article" date="1997" name="Yeast">
        <title>Sequence analysis of 203 kilobases from Saccharomyces cerevisiae chromosome VII.</title>
        <authorList>
            <person name="Rieger M."/>
            <person name="Brueckner M."/>
            <person name="Schaefer M."/>
            <person name="Mueller-Auer S."/>
        </authorList>
    </citation>
    <scope>NUCLEOTIDE SEQUENCE [GENOMIC DNA]</scope>
    <source>
        <strain>ATCC 204508 / S288c</strain>
    </source>
</reference>
<reference key="4">
    <citation type="journal article" date="1997" name="Nature">
        <title>The nucleotide sequence of Saccharomyces cerevisiae chromosome VII.</title>
        <authorList>
            <person name="Tettelin H."/>
            <person name="Agostoni-Carbone M.L."/>
            <person name="Albermann K."/>
            <person name="Albers M."/>
            <person name="Arroyo J."/>
            <person name="Backes U."/>
            <person name="Barreiros T."/>
            <person name="Bertani I."/>
            <person name="Bjourson A.J."/>
            <person name="Brueckner M."/>
            <person name="Bruschi C.V."/>
            <person name="Carignani G."/>
            <person name="Castagnoli L."/>
            <person name="Cerdan E."/>
            <person name="Clemente M.L."/>
            <person name="Coblenz A."/>
            <person name="Coglievina M."/>
            <person name="Coissac E."/>
            <person name="Defoor E."/>
            <person name="Del Bino S."/>
            <person name="Delius H."/>
            <person name="Delneri D."/>
            <person name="de Wergifosse P."/>
            <person name="Dujon B."/>
            <person name="Durand P."/>
            <person name="Entian K.-D."/>
            <person name="Eraso P."/>
            <person name="Escribano V."/>
            <person name="Fabiani L."/>
            <person name="Fartmann B."/>
            <person name="Feroli F."/>
            <person name="Feuermann M."/>
            <person name="Frontali L."/>
            <person name="Garcia-Gonzalez M."/>
            <person name="Garcia-Saez M.I."/>
            <person name="Goffeau A."/>
            <person name="Guerreiro P."/>
            <person name="Hani J."/>
            <person name="Hansen M."/>
            <person name="Hebling U."/>
            <person name="Hernandez K."/>
            <person name="Heumann K."/>
            <person name="Hilger F."/>
            <person name="Hofmann B."/>
            <person name="Indge K.J."/>
            <person name="James C.M."/>
            <person name="Klima R."/>
            <person name="Koetter P."/>
            <person name="Kramer B."/>
            <person name="Kramer W."/>
            <person name="Lauquin G."/>
            <person name="Leuther H."/>
            <person name="Louis E.J."/>
            <person name="Maillier E."/>
            <person name="Marconi A."/>
            <person name="Martegani E."/>
            <person name="Mazon M.J."/>
            <person name="Mazzoni C."/>
            <person name="McReynolds A.D.K."/>
            <person name="Melchioretto P."/>
            <person name="Mewes H.-W."/>
            <person name="Minenkova O."/>
            <person name="Mueller-Auer S."/>
            <person name="Nawrocki A."/>
            <person name="Netter P."/>
            <person name="Neu R."/>
            <person name="Nombela C."/>
            <person name="Oliver S.G."/>
            <person name="Panzeri L."/>
            <person name="Paoluzi S."/>
            <person name="Plevani P."/>
            <person name="Portetelle D."/>
            <person name="Portillo F."/>
            <person name="Potier S."/>
            <person name="Purnelle B."/>
            <person name="Rieger M."/>
            <person name="Riles L."/>
            <person name="Rinaldi T."/>
            <person name="Robben J."/>
            <person name="Rodrigues-Pousada C."/>
            <person name="Rodriguez-Belmonte E."/>
            <person name="Rodriguez-Torres A.M."/>
            <person name="Rose M."/>
            <person name="Ruzzi M."/>
            <person name="Saliola M."/>
            <person name="Sanchez-Perez M."/>
            <person name="Schaefer B."/>
            <person name="Schaefer M."/>
            <person name="Scharfe M."/>
            <person name="Schmidheini T."/>
            <person name="Schreer A."/>
            <person name="Skala J."/>
            <person name="Souciet J.-L."/>
            <person name="Steensma H.Y."/>
            <person name="Talla E."/>
            <person name="Thierry A."/>
            <person name="Vandenbol M."/>
            <person name="van der Aart Q.J.M."/>
            <person name="Van Dyck L."/>
            <person name="Vanoni M."/>
            <person name="Verhasselt P."/>
            <person name="Voet M."/>
            <person name="Volckaert G."/>
            <person name="Wambutt R."/>
            <person name="Watson M.D."/>
            <person name="Weber N."/>
            <person name="Wedler E."/>
            <person name="Wedler H."/>
            <person name="Wipfli P."/>
            <person name="Wolf K."/>
            <person name="Wright L.F."/>
            <person name="Zaccaria P."/>
            <person name="Zimmermann M."/>
            <person name="Zollner A."/>
            <person name="Kleine K."/>
        </authorList>
    </citation>
    <scope>NUCLEOTIDE SEQUENCE [LARGE SCALE GENOMIC DNA]</scope>
    <source>
        <strain>ATCC 204508 / S288c</strain>
    </source>
</reference>
<reference key="5">
    <citation type="journal article" date="2014" name="G3 (Bethesda)">
        <title>The reference genome sequence of Saccharomyces cerevisiae: Then and now.</title>
        <authorList>
            <person name="Engel S.R."/>
            <person name="Dietrich F.S."/>
            <person name="Fisk D.G."/>
            <person name="Binkley G."/>
            <person name="Balakrishnan R."/>
            <person name="Costanzo M.C."/>
            <person name="Dwight S.S."/>
            <person name="Hitz B.C."/>
            <person name="Karra K."/>
            <person name="Nash R.S."/>
            <person name="Weng S."/>
            <person name="Wong E.D."/>
            <person name="Lloyd P."/>
            <person name="Skrzypek M.S."/>
            <person name="Miyasato S.R."/>
            <person name="Simison M."/>
            <person name="Cherry J.M."/>
        </authorList>
    </citation>
    <scope>GENOME REANNOTATION</scope>
    <source>
        <strain>ATCC 204508 / S288c</strain>
    </source>
</reference>
<reference key="6">
    <citation type="journal article" date="1996" name="Mol. Cell. Biol.">
        <title>Yeast nucleoporin mutants are defective in pre-tRNA splicing.</title>
        <authorList>
            <person name="Sharma K."/>
            <person name="Fabre E."/>
            <person name="Tekotte H."/>
            <person name="Hurt E.C."/>
            <person name="Tollervey D."/>
        </authorList>
    </citation>
    <scope>FUNCTION</scope>
    <scope>NUCLEAR TRNA EXPORT</scope>
</reference>
<reference key="7">
    <citation type="journal article" date="1997" name="EMBO J.">
        <title>Two functionally distinct domains generated by in vivo cleavage of Nup145p: a novel biogenesis pathway for nucleoporins.</title>
        <authorList>
            <person name="Teixeira M.T."/>
            <person name="Siniossoglou S."/>
            <person name="Podtelejnikov S."/>
            <person name="Benichou J.C."/>
            <person name="Mann M."/>
            <person name="Dujon B."/>
            <person name="Hurt E.C."/>
            <person name="Fabre E."/>
        </authorList>
    </citation>
    <scope>FUNCTION</scope>
    <scope>CLEAVAGE</scope>
    <scope>MUTAGENESIS OF HIS-604; PHE-605 AND TRP-608</scope>
</reference>
<reference key="8">
    <citation type="journal article" date="1999" name="J. Biol. Chem.">
        <title>Self-catalyzed cleavage of the yeast nucleoporin Nup145p precursor.</title>
        <authorList>
            <person name="Teixeira M.T."/>
            <person name="Fabre E."/>
            <person name="Dujon B."/>
        </authorList>
    </citation>
    <scope>FUNCTION</scope>
    <scope>AUTOCATALYTIC CLEAVAGE</scope>
    <scope>MUTAGENESIS OF SER-606</scope>
</reference>
<reference key="9">
    <citation type="journal article" date="2000" name="Nature">
        <title>Nuclear pore complexes in the organization of silent telomeric chromatin.</title>
        <authorList>
            <person name="Galy V."/>
            <person name="Olivo-Marin J.-C."/>
            <person name="Scherthan H."/>
            <person name="Doye V."/>
            <person name="Rascalou N."/>
            <person name="Nehrbass U."/>
        </authorList>
    </citation>
    <scope>FUNCTION</scope>
    <scope>INTERACTION WITH MLP1 AND MLP2</scope>
</reference>
<reference key="10">
    <citation type="journal article" date="2000" name="J. Cell Biol.">
        <title>The yeast nuclear pore complex: composition, architecture, and transport mechanism.</title>
        <authorList>
            <person name="Rout M.P."/>
            <person name="Aitchison J.D."/>
            <person name="Suprapto A."/>
            <person name="Hjertaas K."/>
            <person name="Zhao Y."/>
            <person name="Chait B.T."/>
        </authorList>
    </citation>
    <scope>FUNCTION</scope>
    <scope>IDENTIFICATION IN THE NUCLEAR PORE COMPLEX</scope>
    <scope>SUBCELLULAR LOCATION</scope>
</reference>
<reference key="11">
    <citation type="journal article" date="2002" name="EMBO J.">
        <title>Modular self-assembly of a Y-shaped multiprotein complex from seven nucleoporins.</title>
        <authorList>
            <person name="Lutzmann M."/>
            <person name="Kunze R."/>
            <person name="Buerer A."/>
            <person name="Aebi U."/>
            <person name="Hurt E.C."/>
        </authorList>
    </citation>
    <scope>FUNCTION</scope>
    <scope>NUP84 NPC SUBCOMPLEX ASSEMBLY/STRUCTURE</scope>
</reference>
<reference key="12">
    <citation type="journal article" date="2003" name="Nature">
        <title>Global analysis of protein expression in yeast.</title>
        <authorList>
            <person name="Ghaemmaghami S."/>
            <person name="Huh W.-K."/>
            <person name="Bower K."/>
            <person name="Howson R.W."/>
            <person name="Belle A."/>
            <person name="Dephoure N."/>
            <person name="O'Shea E.K."/>
            <person name="Weissman J.S."/>
        </authorList>
    </citation>
    <scope>LEVEL OF PROTEIN EXPRESSION [LARGE SCALE ANALYSIS]</scope>
</reference>
<reference key="13">
    <citation type="journal article" date="2003" name="Proc. Natl. Acad. Sci. U.S.A.">
        <title>Disorder in the nuclear pore complex: the FG repeat regions of nucleoporins are natively unfolded.</title>
        <authorList>
            <person name="Denning D.P."/>
            <person name="Patel S.S."/>
            <person name="Uversky V."/>
            <person name="Fink A.L."/>
            <person name="Rexach M."/>
        </authorList>
    </citation>
    <scope>FUNCTION</scope>
    <scope>FG REPEAT STRUCTURE</scope>
</reference>
<reference key="14">
    <citation type="journal article" date="2004" name="Nat. Cell Biol.">
        <title>Minimal nuclear pore complexes define FG repeat domains essential for transport.</title>
        <authorList>
            <person name="Strawn L.A."/>
            <person name="Shen T.X."/>
            <person name="Shulga N."/>
            <person name="Goldfarb D.S."/>
            <person name="Wente S.R."/>
        </authorList>
    </citation>
    <scope>FUNCTION</scope>
    <scope>FG REPEATS IN NPC TRANSPORT</scope>
</reference>
<reference key="15">
    <citation type="journal article" date="2003" name="Dev. Cell">
        <title>Peering through the pore: nuclear pore complex structure, assembly, and function.</title>
        <authorList>
            <person name="Suntharalingam M."/>
            <person name="Wente S.R."/>
        </authorList>
    </citation>
    <scope>REVIEW</scope>
</reference>
<reference key="16">
    <citation type="journal article" date="2007" name="J. Proteome Res.">
        <title>Large-scale phosphorylation analysis of alpha-factor-arrested Saccharomyces cerevisiae.</title>
        <authorList>
            <person name="Li X."/>
            <person name="Gerber S.A."/>
            <person name="Rudner A.D."/>
            <person name="Beausoleil S.A."/>
            <person name="Haas W."/>
            <person name="Villen J."/>
            <person name="Elias J.E."/>
            <person name="Gygi S.P."/>
        </authorList>
    </citation>
    <scope>PHOSPHORYLATION [LARGE SCALE ANALYSIS] AT SER-667</scope>
    <scope>IDENTIFICATION BY MASS SPECTROMETRY [LARGE SCALE ANALYSIS]</scope>
    <source>
        <strain>ADR376</strain>
    </source>
</reference>
<reference key="17">
    <citation type="journal article" date="2007" name="Proc. Natl. Acad. Sci. U.S.A.">
        <title>Analysis of phosphorylation sites on proteins from Saccharomyces cerevisiae by electron transfer dissociation (ETD) mass spectrometry.</title>
        <authorList>
            <person name="Chi A."/>
            <person name="Huttenhower C."/>
            <person name="Geer L.Y."/>
            <person name="Coon J.J."/>
            <person name="Syka J.E.P."/>
            <person name="Bai D.L."/>
            <person name="Shabanowitz J."/>
            <person name="Burke D.J."/>
            <person name="Troyanskaya O.G."/>
            <person name="Hunt D.F."/>
        </authorList>
    </citation>
    <scope>PHOSPHORYLATION [LARGE SCALE ANALYSIS] AT THR-751</scope>
    <scope>IDENTIFICATION BY MASS SPECTROMETRY [LARGE SCALE ANALYSIS]</scope>
</reference>
<reference key="18">
    <citation type="journal article" date="2008" name="Mol. Cell. Proteomics">
        <title>A multidimensional chromatography technology for in-depth phosphoproteome analysis.</title>
        <authorList>
            <person name="Albuquerque C.P."/>
            <person name="Smolka M.B."/>
            <person name="Payne S.H."/>
            <person name="Bafna V."/>
            <person name="Eng J."/>
            <person name="Zhou H."/>
        </authorList>
    </citation>
    <scope>PHOSPHORYLATION [LARGE SCALE ANALYSIS] AT SER-667; SER-679; SER-689 AND THR-751</scope>
    <scope>IDENTIFICATION BY MASS SPECTROMETRY [LARGE SCALE ANALYSIS]</scope>
</reference>
<reference key="19">
    <citation type="journal article" date="2009" name="Science">
        <title>Global analysis of Cdk1 substrate phosphorylation sites provides insights into evolution.</title>
        <authorList>
            <person name="Holt L.J."/>
            <person name="Tuch B.B."/>
            <person name="Villen J."/>
            <person name="Johnson A.D."/>
            <person name="Gygi S.P."/>
            <person name="Morgan D.O."/>
        </authorList>
    </citation>
    <scope>PHOSPHORYLATION [LARGE SCALE ANALYSIS] AT SER-273; SER-403; SER-404; SER-414; SER-667; SER-679 AND SER-689</scope>
    <scope>IDENTIFICATION BY MASS SPECTROMETRY [LARGE SCALE ANALYSIS]</scope>
</reference>
<reference key="20">
    <citation type="journal article" date="2007" name="Cell">
        <title>Architecture of a coat for the nuclear pore membrane.</title>
        <authorList>
            <person name="Hsia K.C."/>
            <person name="Stavropoulos P."/>
            <person name="Blobel G."/>
            <person name="Hoelz A."/>
        </authorList>
    </citation>
    <scope>X-RAY CRYSTALLOGRAPHY (3.0 ANGSTROMS) OF 731-1158 IN COMPLEX WITH HUMAN SEC13</scope>
</reference>
<proteinExistence type="evidence at protein level"/>
<name>NU145_YEAST</name>
<accession>P49687</accession>
<accession>D6VU53</accession>
<organism>
    <name type="scientific">Saccharomyces cerevisiae (strain ATCC 204508 / S288c)</name>
    <name type="common">Baker's yeast</name>
    <dbReference type="NCBI Taxonomy" id="559292"/>
    <lineage>
        <taxon>Eukaryota</taxon>
        <taxon>Fungi</taxon>
        <taxon>Dikarya</taxon>
        <taxon>Ascomycota</taxon>
        <taxon>Saccharomycotina</taxon>
        <taxon>Saccharomycetes</taxon>
        <taxon>Saccharomycetales</taxon>
        <taxon>Saccharomycetaceae</taxon>
        <taxon>Saccharomyces</taxon>
    </lineage>
</organism>
<dbReference type="EC" id="3.4.21.-"/>
<dbReference type="EMBL" id="X76557">
    <property type="protein sequence ID" value="CAA54057.1"/>
    <property type="molecule type" value="Genomic_DNA"/>
</dbReference>
<dbReference type="EMBL" id="Z32672">
    <property type="protein sequence ID" value="CAA83584.1"/>
    <property type="molecule type" value="Genomic_DNA"/>
</dbReference>
<dbReference type="EMBL" id="Z72614">
    <property type="protein sequence ID" value="CAA96798.1"/>
    <property type="molecule type" value="Genomic_DNA"/>
</dbReference>
<dbReference type="EMBL" id="BK006941">
    <property type="protein sequence ID" value="DAA08014.1"/>
    <property type="molecule type" value="Genomic_DNA"/>
</dbReference>
<dbReference type="PIR" id="A54831">
    <property type="entry name" value="A54831"/>
</dbReference>
<dbReference type="RefSeq" id="NP_011423.1">
    <property type="nucleotide sequence ID" value="NM_001180957.1"/>
</dbReference>
<dbReference type="PDB" id="3BG0">
    <property type="method" value="X-ray"/>
    <property type="resolution" value="3.15 A"/>
    <property type="chains" value="B/C/F/G=731-1158"/>
</dbReference>
<dbReference type="PDB" id="3BG1">
    <property type="method" value="X-ray"/>
    <property type="resolution" value="3.00 A"/>
    <property type="chains" value="B/C/F/G=731-1158"/>
</dbReference>
<dbReference type="PDB" id="3IKO">
    <property type="method" value="X-ray"/>
    <property type="resolution" value="3.20 A"/>
    <property type="chains" value="B/E/H=731-1158"/>
</dbReference>
<dbReference type="PDB" id="3JRO">
    <property type="method" value="X-ray"/>
    <property type="resolution" value="4.00 A"/>
    <property type="chains" value="A=714-1160"/>
</dbReference>
<dbReference type="PDB" id="3JRP">
    <property type="method" value="X-ray"/>
    <property type="resolution" value="2.60 A"/>
    <property type="chains" value="A=714-784"/>
</dbReference>
<dbReference type="PDB" id="3KEP">
    <property type="method" value="X-ray"/>
    <property type="resolution" value="1.82 A"/>
    <property type="chains" value="A/B=442-605"/>
</dbReference>
<dbReference type="PDB" id="3KES">
    <property type="method" value="X-ray"/>
    <property type="resolution" value="2.10 A"/>
    <property type="chains" value="A/B=442-605"/>
</dbReference>
<dbReference type="PDB" id="4XMM">
    <property type="method" value="X-ray"/>
    <property type="resolution" value="7.38 A"/>
    <property type="chains" value="B=680-1317"/>
</dbReference>
<dbReference type="PDB" id="4XMN">
    <property type="method" value="X-ray"/>
    <property type="resolution" value="7.60 A"/>
    <property type="chains" value="B=680-1317"/>
</dbReference>
<dbReference type="PDB" id="7N84">
    <property type="method" value="EM"/>
    <property type="resolution" value="11.60 A"/>
    <property type="chains" value="c/n=606-1317"/>
</dbReference>
<dbReference type="PDB" id="7N9F">
    <property type="method" value="EM"/>
    <property type="resolution" value="37.00 A"/>
    <property type="chains" value="c/j=606-1317"/>
</dbReference>
<dbReference type="PDB" id="8TIE">
    <property type="method" value="EM"/>
    <property type="resolution" value="8.10 A"/>
    <property type="chains" value="c/n=1-1317"/>
</dbReference>
<dbReference type="PDBsum" id="3BG0"/>
<dbReference type="PDBsum" id="3BG1"/>
<dbReference type="PDBsum" id="3IKO"/>
<dbReference type="PDBsum" id="3JRO"/>
<dbReference type="PDBsum" id="3JRP"/>
<dbReference type="PDBsum" id="3KEP"/>
<dbReference type="PDBsum" id="3KES"/>
<dbReference type="PDBsum" id="4XMM"/>
<dbReference type="PDBsum" id="4XMN"/>
<dbReference type="PDBsum" id="7N84"/>
<dbReference type="PDBsum" id="7N9F"/>
<dbReference type="PDBsum" id="8TIE"/>
<dbReference type="EMDB" id="EMD-24231"/>
<dbReference type="EMDB" id="EMD-24258"/>
<dbReference type="SMR" id="P49687"/>
<dbReference type="BioGRID" id="33159">
    <property type="interactions" value="284"/>
</dbReference>
<dbReference type="ComplexPortal" id="CPX-824">
    <property type="entry name" value="Nuclear pore complex"/>
</dbReference>
<dbReference type="DIP" id="DIP-2074N"/>
<dbReference type="FunCoup" id="P49687">
    <property type="interactions" value="890"/>
</dbReference>
<dbReference type="IntAct" id="P49687">
    <property type="interactions" value="30"/>
</dbReference>
<dbReference type="MINT" id="P49687"/>
<dbReference type="STRING" id="4932.YGL092W"/>
<dbReference type="MEROPS" id="S59.002"/>
<dbReference type="TCDB" id="1.I.1.1.1">
    <property type="family name" value="the nuclear pore complex (npc) family"/>
</dbReference>
<dbReference type="GlyGen" id="P49687">
    <property type="glycosylation" value="3 sites, 1 O-linked glycan (1 site)"/>
</dbReference>
<dbReference type="iPTMnet" id="P49687"/>
<dbReference type="PaxDb" id="4932-YGL092W"/>
<dbReference type="PeptideAtlas" id="P49687"/>
<dbReference type="DNASU" id="852788"/>
<dbReference type="EnsemblFungi" id="YGL092W_mRNA">
    <property type="protein sequence ID" value="YGL092W"/>
    <property type="gene ID" value="YGL092W"/>
</dbReference>
<dbReference type="GeneID" id="852788"/>
<dbReference type="KEGG" id="sce:YGL092W"/>
<dbReference type="AGR" id="SGD:S000003060"/>
<dbReference type="SGD" id="S000003060">
    <property type="gene designation" value="NUP145"/>
</dbReference>
<dbReference type="VEuPathDB" id="FungiDB:YGL092W"/>
<dbReference type="eggNOG" id="KOG0845">
    <property type="taxonomic scope" value="Eukaryota"/>
</dbReference>
<dbReference type="HOGENOM" id="CLU_005908_0_0_1"/>
<dbReference type="InParanoid" id="P49687"/>
<dbReference type="OMA" id="PMGKGLN"/>
<dbReference type="OrthoDB" id="3797628at2759"/>
<dbReference type="BioCyc" id="YEAST:G3O-30592-MONOMER"/>
<dbReference type="BioGRID-ORCS" id="852788">
    <property type="hits" value="1 hit in 10 CRISPR screens"/>
</dbReference>
<dbReference type="CD-CODE" id="691A1FB1">
    <property type="entry name" value="Nuclear pore complex"/>
</dbReference>
<dbReference type="EvolutionaryTrace" id="P49687"/>
<dbReference type="PRO" id="PR:P49687"/>
<dbReference type="Proteomes" id="UP000002311">
    <property type="component" value="Chromosome VII"/>
</dbReference>
<dbReference type="RNAct" id="P49687">
    <property type="molecule type" value="protein"/>
</dbReference>
<dbReference type="GO" id="GO:0000781">
    <property type="term" value="C:chromosome, telomeric region"/>
    <property type="evidence" value="ECO:0007669"/>
    <property type="project" value="GOC"/>
</dbReference>
<dbReference type="GO" id="GO:0031965">
    <property type="term" value="C:nuclear membrane"/>
    <property type="evidence" value="ECO:0007669"/>
    <property type="project" value="UniProtKB-SubCell"/>
</dbReference>
<dbReference type="GO" id="GO:0005643">
    <property type="term" value="C:nuclear pore"/>
    <property type="evidence" value="ECO:0000314"/>
    <property type="project" value="SGD"/>
</dbReference>
<dbReference type="GO" id="GO:0044613">
    <property type="term" value="C:nuclear pore central transport channel"/>
    <property type="evidence" value="ECO:0000314"/>
    <property type="project" value="SGD"/>
</dbReference>
<dbReference type="GO" id="GO:0044614">
    <property type="term" value="C:nuclear pore cytoplasmic filaments"/>
    <property type="evidence" value="ECO:0000318"/>
    <property type="project" value="GO_Central"/>
</dbReference>
<dbReference type="GO" id="GO:0031080">
    <property type="term" value="C:nuclear pore outer ring"/>
    <property type="evidence" value="ECO:0000314"/>
    <property type="project" value="SGD"/>
</dbReference>
<dbReference type="GO" id="GO:0016787">
    <property type="term" value="F:hydrolase activity"/>
    <property type="evidence" value="ECO:0007669"/>
    <property type="project" value="UniProtKB-KW"/>
</dbReference>
<dbReference type="GO" id="GO:0008139">
    <property type="term" value="F:nuclear localization sequence binding"/>
    <property type="evidence" value="ECO:0000318"/>
    <property type="project" value="GO_Central"/>
</dbReference>
<dbReference type="GO" id="GO:0003723">
    <property type="term" value="F:RNA binding"/>
    <property type="evidence" value="ECO:0000314"/>
    <property type="project" value="SGD"/>
</dbReference>
<dbReference type="GO" id="GO:0017056">
    <property type="term" value="F:structural constituent of nuclear pore"/>
    <property type="evidence" value="ECO:0000315"/>
    <property type="project" value="SGD"/>
</dbReference>
<dbReference type="GO" id="GO:0006302">
    <property type="term" value="P:double-strand break repair"/>
    <property type="evidence" value="ECO:0000315"/>
    <property type="project" value="SGD"/>
</dbReference>
<dbReference type="GO" id="GO:0006607">
    <property type="term" value="P:NLS-bearing protein import into nucleus"/>
    <property type="evidence" value="ECO:0000316"/>
    <property type="project" value="SGD"/>
</dbReference>
<dbReference type="GO" id="GO:0051664">
    <property type="term" value="P:nuclear pore localization"/>
    <property type="evidence" value="ECO:0000315"/>
    <property type="project" value="SGD"/>
</dbReference>
<dbReference type="GO" id="GO:0016973">
    <property type="term" value="P:poly(A)+ mRNA export from nucleus"/>
    <property type="evidence" value="ECO:0000315"/>
    <property type="project" value="SGD"/>
</dbReference>
<dbReference type="GO" id="GO:0045893">
    <property type="term" value="P:positive regulation of DNA-templated transcription"/>
    <property type="evidence" value="ECO:0000314"/>
    <property type="project" value="SGD"/>
</dbReference>
<dbReference type="GO" id="GO:0000973">
    <property type="term" value="P:post-transcriptional tethering of RNA polymerase II gene DNA at nuclear periphery"/>
    <property type="evidence" value="ECO:0000315"/>
    <property type="project" value="SGD"/>
</dbReference>
<dbReference type="GO" id="GO:0006606">
    <property type="term" value="P:protein import into nucleus"/>
    <property type="evidence" value="ECO:0000316"/>
    <property type="project" value="SGD"/>
</dbReference>
<dbReference type="GO" id="GO:0036228">
    <property type="term" value="P:protein localization to nuclear inner membrane"/>
    <property type="evidence" value="ECO:0000316"/>
    <property type="project" value="SGD"/>
</dbReference>
<dbReference type="GO" id="GO:0046822">
    <property type="term" value="P:regulation of nucleocytoplasmic transport"/>
    <property type="evidence" value="ECO:0000315"/>
    <property type="project" value="SGD"/>
</dbReference>
<dbReference type="GO" id="GO:0006405">
    <property type="term" value="P:RNA export from nucleus"/>
    <property type="evidence" value="ECO:0000318"/>
    <property type="project" value="GO_Central"/>
</dbReference>
<dbReference type="GO" id="GO:0031509">
    <property type="term" value="P:subtelomeric heterochromatin formation"/>
    <property type="evidence" value="ECO:0000315"/>
    <property type="project" value="SGD"/>
</dbReference>
<dbReference type="GO" id="GO:0034398">
    <property type="term" value="P:telomere tethering at nuclear periphery"/>
    <property type="evidence" value="ECO:0000315"/>
    <property type="project" value="SGD"/>
</dbReference>
<dbReference type="GO" id="GO:0006409">
    <property type="term" value="P:tRNA export from nucleus"/>
    <property type="evidence" value="ECO:0000315"/>
    <property type="project" value="SGD"/>
</dbReference>
<dbReference type="FunFam" id="1.25.40.690:FF:000007">
    <property type="entry name" value="Nucleoporin NUP145"/>
    <property type="match status" value="1"/>
</dbReference>
<dbReference type="FunFam" id="3.30.1610.10:FF:000003">
    <property type="entry name" value="Nucleoporin SONB, putative"/>
    <property type="match status" value="1"/>
</dbReference>
<dbReference type="Gene3D" id="1.25.40.690">
    <property type="match status" value="1"/>
</dbReference>
<dbReference type="Gene3D" id="6.20.50.170">
    <property type="match status" value="1"/>
</dbReference>
<dbReference type="Gene3D" id="3.30.1610.10">
    <property type="entry name" value="Peptidase S59, nucleoporin"/>
    <property type="match status" value="1"/>
</dbReference>
<dbReference type="InterPro" id="IPR025574">
    <property type="entry name" value="Nucleoporin_FG_rpt"/>
</dbReference>
<dbReference type="InterPro" id="IPR037665">
    <property type="entry name" value="Nucleoporin_S59-like"/>
</dbReference>
<dbReference type="InterPro" id="IPR007230">
    <property type="entry name" value="Nup98_auto-Pept-S59_dom"/>
</dbReference>
<dbReference type="InterPro" id="IPR036903">
    <property type="entry name" value="Nup98_auto-Pept-S59_dom_sf"/>
</dbReference>
<dbReference type="InterPro" id="IPR021967">
    <property type="entry name" value="Nup98_C"/>
</dbReference>
<dbReference type="PANTHER" id="PTHR23198:SF6">
    <property type="entry name" value="NUCLEAR PORE COMPLEX PROTEIN NUP98-NUP96"/>
    <property type="match status" value="1"/>
</dbReference>
<dbReference type="PANTHER" id="PTHR23198">
    <property type="entry name" value="NUCLEOPORIN"/>
    <property type="match status" value="1"/>
</dbReference>
<dbReference type="Pfam" id="PF04096">
    <property type="entry name" value="Nucleoporin2"/>
    <property type="match status" value="1"/>
</dbReference>
<dbReference type="Pfam" id="PF13634">
    <property type="entry name" value="Nucleoporin_FG"/>
    <property type="match status" value="1"/>
</dbReference>
<dbReference type="Pfam" id="PF12110">
    <property type="entry name" value="Nup96"/>
    <property type="match status" value="1"/>
</dbReference>
<dbReference type="SUPFAM" id="SSF82215">
    <property type="entry name" value="C-terminal autoproteolytic domain of nucleoporin nup98"/>
    <property type="match status" value="1"/>
</dbReference>
<dbReference type="PROSITE" id="PS51434">
    <property type="entry name" value="NUP_C"/>
    <property type="match status" value="1"/>
</dbReference>
<evidence type="ECO:0000255" key="1"/>
<evidence type="ECO:0000255" key="2">
    <source>
        <dbReference type="PROSITE-ProRule" id="PRU00765"/>
    </source>
</evidence>
<evidence type="ECO:0000256" key="3">
    <source>
        <dbReference type="SAM" id="MobiDB-lite"/>
    </source>
</evidence>
<evidence type="ECO:0000269" key="4">
    <source>
    </source>
</evidence>
<evidence type="ECO:0000269" key="5">
    <source>
    </source>
</evidence>
<evidence type="ECO:0000269" key="6">
    <source>
    </source>
</evidence>
<evidence type="ECO:0000269" key="7">
    <source>
    </source>
</evidence>
<evidence type="ECO:0000269" key="8">
    <source>
    </source>
</evidence>
<evidence type="ECO:0000269" key="9">
    <source>
    </source>
</evidence>
<evidence type="ECO:0000269" key="10">
    <source>
    </source>
</evidence>
<evidence type="ECO:0000269" key="11">
    <source>
    </source>
</evidence>
<evidence type="ECO:0000269" key="12">
    <source>
    </source>
</evidence>
<evidence type="ECO:0000269" key="13">
    <source>
    </source>
</evidence>
<evidence type="ECO:0000269" key="14">
    <source>
    </source>
</evidence>
<evidence type="ECO:0000269" key="15">
    <source>
    </source>
</evidence>
<evidence type="ECO:0000305" key="16"/>
<evidence type="ECO:0007744" key="17">
    <source>
    </source>
</evidence>
<evidence type="ECO:0007744" key="18">
    <source>
    </source>
</evidence>
<evidence type="ECO:0007744" key="19">
    <source>
    </source>
</evidence>
<evidence type="ECO:0007744" key="20">
    <source>
    </source>
</evidence>
<evidence type="ECO:0007829" key="21">
    <source>
        <dbReference type="PDB" id="3BG0"/>
    </source>
</evidence>
<evidence type="ECO:0007829" key="22">
    <source>
        <dbReference type="PDB" id="3BG1"/>
    </source>
</evidence>
<evidence type="ECO:0007829" key="23">
    <source>
        <dbReference type="PDB" id="3IKO"/>
    </source>
</evidence>
<evidence type="ECO:0007829" key="24">
    <source>
        <dbReference type="PDB" id="3JRP"/>
    </source>
</evidence>
<evidence type="ECO:0007829" key="25">
    <source>
        <dbReference type="PDB" id="3KEP"/>
    </source>
</evidence>
<evidence type="ECO:0007829" key="26">
    <source>
        <dbReference type="PDB" id="3KES"/>
    </source>
</evidence>
<sequence>MFNKSVNSGFTFGNQNTSTPTSTPAQPSSSLQFPQKSTGLFGNVNVNANTSTPSPSGGLFNANSNANSISQQPANNSLFGNKPAQPSGGLFGATNNTTSKSAGSLFGNNNATANSTGSTGLFSGSNNIASSTQNGGLFGNSNNNNITSTTQNGGLFGKPTTTPAGAGGLFGNSSSTNSTTGLFGSNNTQSSTGIFGQKPGASTTGGLFGNNGASFPRSGETTGTMSTNPYGINISNVPMAVADMPRSITSSLSDVNGKSDAEPKPIENRRTYSFSSSVSGNAPLPLASQSSLVSRLSTRLKATQKSTSPNEIFSPSYSKPWLNGAGSAPLVDDFFSSKMTSLAPNENSIFPQNGFNFLSSQRADLTELRKLKIDSNRSAAKKLKLLSGTPAITKKHMQDEQDSSENEPIANADSVTNIDRKENRDNNLDNTYLNGKEQSNNLNKQDGENTLQHEKSSSFGYWCSPSPEQLERLSLKQLAAVSNFVIGRRGYGCITFQHDVDLTAFTKSFREELFGKIVIFRSSKTVEVYPDEATKPMIGHGLNVPAIITLENVYPVDKKTKKPMKDTTKFAEFQVFDRKLRSMREMNYISYNPFGGTWTFKVNHFSIWGLVNEEDAEIDEDDLSKQEDGGEQPLRKVRTLAQSKPSDKEVILKTDGTFGTLSGKDDSIVEEKAYEPDLSDADFEGIEASPKLDVSKDWVEQLILAGSSLRSVFATSKEFDGPCQNEIDLLFSECNDEIDNAKLIMKERRFTASYTFAKFSTGSMLLTKDIVGKSGVSIKRLPTELQRKFLFDDVYLDKEIEKVTIEARKSNPYPQISESSLLFKDALDYMEKTSSDYNLWKLSSILFDPVSYPYKTDNDQVKMALLKKERHCRLTSWIVSQIGPEIEEKIRNSSNEIEQIFLYLLLNDVVRASKLAIESKNGHLSVLISYLGSNDPRIRDLAELQLQKWSTGGCSIDKNISKIYKLLSGSPFEGLFSLKELESEFSWLCLLNLTLCYGQIDEYSLESLVQSHLDKFSLPYDDPIGVIFQLYAANENTEKLYKEVRQRTNALDVQFCWYLIQTLRFNGTRVFSKETSDEATFAFAAQLEFAQLHGHSLFVSCFLNDDKAAEDTIKRLVMREITLLRASTNDHILNRLKIPSQLIFNAQALKDRYEGNYLSEVQNLLLGSSYDLAEMAIVTSLGPRLLLSNNPVQNNELKTLREILNEFPDSERDKWSVSINVFEVYLKLVLDNVETQETIDSLISGMKIFYDQYKHCREVAACCNVMSQEIVSKILEKNNPSIGDSKAKLLELPLGQPEKAYLRGEFAQDLMKCTYKI</sequence>
<gene>
    <name type="primary">NUP145</name>
    <name type="synonym">RAT10</name>
    <name type="ordered locus">YGL092W</name>
</gene>
<protein>
    <recommendedName>
        <fullName>Nucleoporin NUP145</fullName>
        <ecNumber>3.4.21.-</ecNumber>
    </recommendedName>
    <alternativeName>
        <fullName>Nuclear pore protein NUP145</fullName>
    </alternativeName>
    <component>
        <recommendedName>
            <fullName>Nucleoporin NUP145N</fullName>
            <shortName>N-NUP145</shortName>
        </recommendedName>
    </component>
    <component>
        <recommendedName>
            <fullName>Nucleoporin NUP145C</fullName>
            <shortName>C-NUP145</shortName>
        </recommendedName>
    </component>
</protein>
<feature type="chain" id="PRO_0000019927" description="Nucleoporin NUP145N">
    <location>
        <begin position="1"/>
        <end position="605"/>
    </location>
</feature>
<feature type="chain" id="PRO_0000019928" description="Nucleoporin NUP145C">
    <location>
        <begin position="606"/>
        <end position="1317"/>
    </location>
</feature>
<feature type="repeat" description="FG 1">
    <location>
        <begin position="12"/>
        <end position="13"/>
    </location>
</feature>
<feature type="repeat" description="GLFG 1">
    <location>
        <begin position="39"/>
        <end position="42"/>
    </location>
</feature>
<feature type="repeat" description="FG 2">
    <location>
        <begin position="79"/>
        <end position="80"/>
    </location>
</feature>
<feature type="repeat" description="GLFG 2">
    <location>
        <begin position="89"/>
        <end position="92"/>
    </location>
</feature>
<feature type="repeat" description="FG 3">
    <location>
        <begin position="106"/>
        <end position="107"/>
    </location>
</feature>
<feature type="repeat" description="GLFG 3">
    <location>
        <begin position="136"/>
        <end position="139"/>
    </location>
</feature>
<feature type="repeat" description="GLFG 4">
    <location>
        <begin position="154"/>
        <end position="157"/>
    </location>
</feature>
<feature type="repeat" description="GLFG 5">
    <location>
        <begin position="168"/>
        <end position="171"/>
    </location>
</feature>
<feature type="repeat" description="GLFG 6">
    <location>
        <begin position="181"/>
        <end position="184"/>
    </location>
</feature>
<feature type="repeat" description="GLFG 7; approximate">
    <location>
        <begin position="193"/>
        <end position="196"/>
    </location>
</feature>
<feature type="repeat" description="GLFG 8">
    <location>
        <begin position="206"/>
        <end position="209"/>
    </location>
</feature>
<feature type="domain" description="Peptidase S59" evidence="2">
    <location>
        <begin position="458"/>
        <end position="605"/>
    </location>
</feature>
<feature type="region of interest" description="Disordered" evidence="3">
    <location>
        <begin position="1"/>
        <end position="36"/>
    </location>
</feature>
<feature type="region of interest" description="Disordered" evidence="3">
    <location>
        <begin position="133"/>
        <end position="165"/>
    </location>
</feature>
<feature type="region of interest" description="Disordered" evidence="3">
    <location>
        <begin position="249"/>
        <end position="278"/>
    </location>
</feature>
<feature type="region of interest" description="Disordered" evidence="3">
    <location>
        <begin position="390"/>
        <end position="450"/>
    </location>
</feature>
<feature type="region of interest" description="Required for autocatalytic cleavage">
    <location>
        <begin position="398"/>
        <end position="523"/>
    </location>
</feature>
<feature type="region of interest" description="Nucleoporin RNA-binding motif (NRM)">
    <location>
        <begin position="460"/>
        <end position="604"/>
    </location>
</feature>
<feature type="short sequence motif" description="Bipartite nuclear localization signal" evidence="1">
    <location>
        <begin position="369"/>
        <end position="385"/>
    </location>
</feature>
<feature type="compositionally biased region" description="Polar residues" evidence="3">
    <location>
        <begin position="1"/>
        <end position="16"/>
    </location>
</feature>
<feature type="compositionally biased region" description="Low complexity" evidence="3">
    <location>
        <begin position="17"/>
        <end position="30"/>
    </location>
</feature>
<feature type="compositionally biased region" description="Low complexity" evidence="3">
    <location>
        <begin position="139"/>
        <end position="164"/>
    </location>
</feature>
<feature type="compositionally biased region" description="Basic and acidic residues" evidence="3">
    <location>
        <begin position="257"/>
        <end position="270"/>
    </location>
</feature>
<feature type="compositionally biased region" description="Basic and acidic residues" evidence="3">
    <location>
        <begin position="418"/>
        <end position="427"/>
    </location>
</feature>
<feature type="compositionally biased region" description="Polar residues" evidence="3">
    <location>
        <begin position="428"/>
        <end position="444"/>
    </location>
</feature>
<feature type="modified residue" description="Phosphoserine" evidence="20">
    <location>
        <position position="273"/>
    </location>
</feature>
<feature type="modified residue" description="Phosphoserine" evidence="20">
    <location>
        <position position="403"/>
    </location>
</feature>
<feature type="modified residue" description="Phosphoserine" evidence="20">
    <location>
        <position position="404"/>
    </location>
</feature>
<feature type="modified residue" description="Phosphoserine" evidence="20">
    <location>
        <position position="414"/>
    </location>
</feature>
<feature type="modified residue" description="Phosphoserine" evidence="18 19 20">
    <location>
        <position position="667"/>
    </location>
</feature>
<feature type="modified residue" description="Phosphoserine" evidence="19 20">
    <location>
        <position position="679"/>
    </location>
</feature>
<feature type="modified residue" description="Phosphoserine" evidence="19 20">
    <location>
        <position position="689"/>
    </location>
</feature>
<feature type="modified residue" description="Phosphothreonine" evidence="17 19">
    <location>
        <position position="751"/>
    </location>
</feature>
<feature type="mutagenesis site" description="Loss of autocatalytic cleavage; when associated with L-608." evidence="15">
    <original>H</original>
    <variation>P</variation>
    <location>
        <position position="604"/>
    </location>
</feature>
<feature type="mutagenesis site" description="Loss of autocatalytic cleavage; when associated with R-608." evidence="15">
    <original>F</original>
    <variation>S</variation>
    <location>
        <position position="605"/>
    </location>
</feature>
<feature type="mutagenesis site" description="Loss of autocatalytic cleavage." evidence="4">
    <original>S</original>
    <variation>A</variation>
    <location>
        <position position="606"/>
    </location>
</feature>
<feature type="mutagenesis site" description="Loss of autocatalytic cleavage; when associated with P-604." evidence="15">
    <original>W</original>
    <variation>L</variation>
    <location>
        <position position="608"/>
    </location>
</feature>
<feature type="mutagenesis site" description="Loss of autocatalytic cleavage; when associated with F-605." evidence="15">
    <original>W</original>
    <variation>R</variation>
    <location>
        <position position="608"/>
    </location>
</feature>
<feature type="sequence conflict" description="In Ref. 2; CAA83584." evidence="16" ref="2">
    <original>NA</original>
    <variation>QR</variation>
    <location>
        <begin position="281"/>
        <end position="282"/>
    </location>
</feature>
<feature type="sequence conflict" description="In Ref. 2; CAA83584." evidence="16" ref="2">
    <original>L</original>
    <variation>S</variation>
    <location>
        <position position="1142"/>
    </location>
</feature>
<feature type="sequence conflict" description="In Ref. 2." evidence="16" ref="2">
    <original>LMKCTYK</original>
    <variation>FEVYI</variation>
    <location>
        <begin position="1310"/>
        <end position="1316"/>
    </location>
</feature>
<feature type="helix" evidence="26">
    <location>
        <begin position="454"/>
        <end position="458"/>
    </location>
</feature>
<feature type="strand" evidence="25">
    <location>
        <begin position="461"/>
        <end position="465"/>
    </location>
</feature>
<feature type="helix" evidence="25">
    <location>
        <begin position="467"/>
        <end position="471"/>
    </location>
</feature>
<feature type="helix" evidence="25">
    <location>
        <begin position="477"/>
        <end position="479"/>
    </location>
</feature>
<feature type="strand" evidence="25">
    <location>
        <begin position="480"/>
        <end position="483"/>
    </location>
</feature>
<feature type="strand" evidence="25">
    <location>
        <begin position="485"/>
        <end position="488"/>
    </location>
</feature>
<feature type="turn" evidence="25">
    <location>
        <begin position="489"/>
        <end position="491"/>
    </location>
</feature>
<feature type="strand" evidence="25">
    <location>
        <begin position="492"/>
        <end position="498"/>
    </location>
</feature>
<feature type="helix" evidence="25">
    <location>
        <begin position="503"/>
        <end position="505"/>
    </location>
</feature>
<feature type="helix" evidence="25">
    <location>
        <begin position="509"/>
        <end position="513"/>
    </location>
</feature>
<feature type="turn" evidence="25">
    <location>
        <begin position="515"/>
        <end position="517"/>
    </location>
</feature>
<feature type="strand" evidence="25">
    <location>
        <begin position="518"/>
        <end position="521"/>
    </location>
</feature>
<feature type="turn" evidence="25">
    <location>
        <begin position="522"/>
        <end position="524"/>
    </location>
</feature>
<feature type="strand" evidence="25">
    <location>
        <begin position="525"/>
        <end position="528"/>
    </location>
</feature>
<feature type="turn" evidence="25">
    <location>
        <begin position="532"/>
        <end position="534"/>
    </location>
</feature>
<feature type="strand" evidence="25">
    <location>
        <begin position="546"/>
        <end position="552"/>
    </location>
</feature>
<feature type="turn" evidence="25">
    <location>
        <begin position="558"/>
        <end position="560"/>
    </location>
</feature>
<feature type="helix" evidence="25">
    <location>
        <begin position="570"/>
        <end position="582"/>
    </location>
</feature>
<feature type="strand" evidence="25">
    <location>
        <begin position="584"/>
        <end position="592"/>
    </location>
</feature>
<feature type="turn" evidence="25">
    <location>
        <begin position="593"/>
        <end position="596"/>
    </location>
</feature>
<feature type="strand" evidence="25">
    <location>
        <begin position="597"/>
        <end position="603"/>
    </location>
</feature>
<feature type="strand" evidence="24">
    <location>
        <begin position="721"/>
        <end position="723"/>
    </location>
</feature>
<feature type="turn" evidence="23">
    <location>
        <begin position="731"/>
        <end position="733"/>
    </location>
</feature>
<feature type="helix" evidence="24">
    <location>
        <begin position="741"/>
        <end position="747"/>
    </location>
</feature>
<feature type="strand" evidence="24">
    <location>
        <begin position="757"/>
        <end position="760"/>
    </location>
</feature>
<feature type="turn" evidence="24">
    <location>
        <begin position="761"/>
        <end position="763"/>
    </location>
</feature>
<feature type="strand" evidence="24">
    <location>
        <begin position="764"/>
        <end position="768"/>
    </location>
</feature>
<feature type="strand" evidence="24">
    <location>
        <begin position="772"/>
        <end position="780"/>
    </location>
</feature>
<feature type="helix" evidence="22">
    <location>
        <begin position="788"/>
        <end position="791"/>
    </location>
</feature>
<feature type="helix" evidence="22">
    <location>
        <begin position="793"/>
        <end position="801"/>
    </location>
</feature>
<feature type="strand" evidence="22">
    <location>
        <begin position="803"/>
        <end position="807"/>
    </location>
</feature>
<feature type="strand" evidence="23">
    <location>
        <begin position="809"/>
        <end position="812"/>
    </location>
</feature>
<feature type="strand" evidence="22">
    <location>
        <begin position="814"/>
        <end position="819"/>
    </location>
</feature>
<feature type="helix" evidence="22">
    <location>
        <begin position="823"/>
        <end position="827"/>
    </location>
</feature>
<feature type="helix" evidence="22">
    <location>
        <begin position="835"/>
        <end position="846"/>
    </location>
</feature>
<feature type="helix" evidence="22">
    <location>
        <begin position="859"/>
        <end position="881"/>
    </location>
</feature>
<feature type="helix" evidence="22">
    <location>
        <begin position="883"/>
        <end position="891"/>
    </location>
</feature>
<feature type="helix" evidence="22">
    <location>
        <begin position="896"/>
        <end position="904"/>
    </location>
</feature>
<feature type="turn" evidence="22">
    <location>
        <begin position="905"/>
        <end position="907"/>
    </location>
</feature>
<feature type="helix" evidence="22">
    <location>
        <begin position="909"/>
        <end position="918"/>
    </location>
</feature>
<feature type="helix" evidence="22">
    <location>
        <begin position="922"/>
        <end position="931"/>
    </location>
</feature>
<feature type="helix" evidence="22">
    <location>
        <begin position="936"/>
        <end position="948"/>
    </location>
</feature>
<feature type="turn" evidence="23">
    <location>
        <begin position="950"/>
        <end position="952"/>
    </location>
</feature>
<feature type="helix" evidence="22">
    <location>
        <begin position="958"/>
        <end position="968"/>
    </location>
</feature>
<feature type="strand" evidence="21">
    <location>
        <begin position="971"/>
        <end position="974"/>
    </location>
</feature>
<feature type="helix" evidence="22">
    <location>
        <begin position="979"/>
        <end position="983"/>
    </location>
</feature>
<feature type="helix" evidence="22">
    <location>
        <begin position="987"/>
        <end position="996"/>
    </location>
</feature>
<feature type="turn" evidence="23">
    <location>
        <begin position="997"/>
        <end position="1002"/>
    </location>
</feature>
<feature type="helix" evidence="22">
    <location>
        <begin position="1005"/>
        <end position="1015"/>
    </location>
</feature>
<feature type="helix" evidence="22">
    <location>
        <begin position="1023"/>
        <end position="1032"/>
    </location>
</feature>
<feature type="helix" evidence="23">
    <location>
        <begin position="1034"/>
        <end position="1036"/>
    </location>
</feature>
<feature type="helix" evidence="22">
    <location>
        <begin position="1037"/>
        <end position="1045"/>
    </location>
</feature>
<feature type="helix" evidence="22">
    <location>
        <begin position="1053"/>
        <end position="1064"/>
    </location>
</feature>
<feature type="helix" evidence="22">
    <location>
        <begin position="1073"/>
        <end position="1089"/>
    </location>
</feature>
<feature type="helix" evidence="22">
    <location>
        <begin position="1093"/>
        <end position="1100"/>
    </location>
</feature>
<feature type="helix" evidence="22">
    <location>
        <begin position="1106"/>
        <end position="1119"/>
    </location>
</feature>
<feature type="helix" evidence="22">
    <location>
        <begin position="1122"/>
        <end position="1124"/>
    </location>
</feature>
<feature type="turn" evidence="22">
    <location>
        <begin position="1126"/>
        <end position="1129"/>
    </location>
</feature>
<feature type="helix" evidence="22">
    <location>
        <begin position="1132"/>
        <end position="1135"/>
    </location>
</feature>
<feature type="helix" evidence="22">
    <location>
        <begin position="1140"/>
        <end position="1157"/>
    </location>
</feature>